<evidence type="ECO:0000250" key="1"/>
<evidence type="ECO:0000256" key="2">
    <source>
        <dbReference type="SAM" id="MobiDB-lite"/>
    </source>
</evidence>
<evidence type="ECO:0000305" key="3"/>
<sequence length="334" mass="36685">MATEEKKPETEASKTQSTPSSSNNQSKPAPVKPNYTLKFTLAGHTKAVSSVKFSPNGEWLASSSADKLIKIWGAYDGKFEKTISGHKLGISDVAWSSDSNLLVSASDDKTLKIWDVSSGKCLKTLKGHSNYVFCCNFNPQSNLIVSGSFDESVRIWDVKTGKCLKTLPAHSDPVSAVHFNRDGSLIVSSSYDGLCRIWDTASGQCLKTLIDDDNPPVSFVKFSPNGKYILAATLDNTLKLWDYSKGKCLKTYTCHKNEKYCIFANFSVTGGKWIVSGSEDNLVYIWNLQTKEVVQKLQGHTDVVISTACHPTENIIASAALENDKTIKLWKSDC</sequence>
<feature type="chain" id="PRO_0000286897" description="WD repeat-containing protein 5">
    <location>
        <begin position="1"/>
        <end position="334"/>
    </location>
</feature>
<feature type="repeat" description="WD 1">
    <location>
        <begin position="43"/>
        <end position="82"/>
    </location>
</feature>
<feature type="repeat" description="WD 2">
    <location>
        <begin position="85"/>
        <end position="126"/>
    </location>
</feature>
<feature type="repeat" description="WD 3">
    <location>
        <begin position="128"/>
        <end position="168"/>
    </location>
</feature>
<feature type="repeat" description="WD 4">
    <location>
        <begin position="169"/>
        <end position="208"/>
    </location>
</feature>
<feature type="repeat" description="WD 5">
    <location>
        <begin position="212"/>
        <end position="253"/>
    </location>
</feature>
<feature type="repeat" description="WD 6">
    <location>
        <begin position="256"/>
        <end position="296"/>
    </location>
</feature>
<feature type="repeat" description="WD 7">
    <location>
        <begin position="299"/>
        <end position="333"/>
    </location>
</feature>
<feature type="region of interest" description="Disordered" evidence="2">
    <location>
        <begin position="1"/>
        <end position="32"/>
    </location>
</feature>
<feature type="compositionally biased region" description="Basic and acidic residues" evidence="2">
    <location>
        <begin position="1"/>
        <end position="12"/>
    </location>
</feature>
<feature type="compositionally biased region" description="Low complexity" evidence="2">
    <location>
        <begin position="13"/>
        <end position="28"/>
    </location>
</feature>
<comment type="function">
    <text evidence="1">Contributes to histone modification. May position the N-terminus of histone H3 for efficient trimethylation at 'Lys-4'. As part of the MLL1/MLL complex it is involved in methylation and dimethylation at 'Lys-4' of histone H3. H3 'Lys-4' methylation represents a specific tag for epigenetic transcriptional activation. As part of the NSL complex it may be involved in acetylation of nucleosomal histone H4 on several lysine residues. May regulate osteoblasts differentiation (By similarity).</text>
</comment>
<comment type="subunit">
    <text evidence="1">Interacts with HCFC1. Probable component of complexes involved in histone modification such as the MLL1/MLL complex and the NSL complex.</text>
</comment>
<comment type="subcellular location">
    <subcellularLocation>
        <location evidence="1">Nucleus</location>
    </subcellularLocation>
</comment>
<comment type="similarity">
    <text evidence="3">Belongs to the WD repeat WDR5/wds family.</text>
</comment>
<protein>
    <recommendedName>
        <fullName>WD repeat-containing protein 5</fullName>
    </recommendedName>
</protein>
<name>WDR5_XENTR</name>
<keyword id="KW-0156">Chromatin regulator</keyword>
<keyword id="KW-0539">Nucleus</keyword>
<keyword id="KW-1185">Reference proteome</keyword>
<keyword id="KW-0677">Repeat</keyword>
<keyword id="KW-0804">Transcription</keyword>
<keyword id="KW-0805">Transcription regulation</keyword>
<keyword id="KW-0853">WD repeat</keyword>
<proteinExistence type="evidence at transcript level"/>
<dbReference type="EMBL" id="CR761006">
    <property type="protein sequence ID" value="CAJ82141.1"/>
    <property type="molecule type" value="mRNA"/>
</dbReference>
<dbReference type="EMBL" id="BC088786">
    <property type="protein sequence ID" value="AAH88786.1"/>
    <property type="molecule type" value="mRNA"/>
</dbReference>
<dbReference type="RefSeq" id="NP_001011411.1">
    <property type="nucleotide sequence ID" value="NM_001011411.2"/>
</dbReference>
<dbReference type="SMR" id="Q5M786"/>
<dbReference type="FunCoup" id="Q5M786">
    <property type="interactions" value="2340"/>
</dbReference>
<dbReference type="STRING" id="8364.ENSXETP00000041797"/>
<dbReference type="PaxDb" id="8364-ENSXETP00000042368"/>
<dbReference type="DNASU" id="496891"/>
<dbReference type="GeneID" id="496891"/>
<dbReference type="KEGG" id="xtr:496891"/>
<dbReference type="AGR" id="Xenbase:XB-GENE-493883"/>
<dbReference type="CTD" id="11091"/>
<dbReference type="Xenbase" id="XB-GENE-493883">
    <property type="gene designation" value="wdr5"/>
</dbReference>
<dbReference type="eggNOG" id="KOG0266">
    <property type="taxonomic scope" value="Eukaryota"/>
</dbReference>
<dbReference type="HOGENOM" id="CLU_000288_57_1_1"/>
<dbReference type="InParanoid" id="Q5M786"/>
<dbReference type="OMA" id="CKGHDTA"/>
<dbReference type="OrthoDB" id="674604at2759"/>
<dbReference type="PhylomeDB" id="Q5M786"/>
<dbReference type="TreeFam" id="TF314125"/>
<dbReference type="Reactome" id="R-XTR-8936459">
    <property type="pathway name" value="RUNX1 regulates genes involved in megakaryocyte differentiation and platelet function"/>
</dbReference>
<dbReference type="Reactome" id="R-XTR-8951664">
    <property type="pathway name" value="Neddylation"/>
</dbReference>
<dbReference type="Reactome" id="R-XTR-9772755">
    <property type="pathway name" value="Formation of WDR5-containing histone-modifying complexes"/>
</dbReference>
<dbReference type="Proteomes" id="UP000008143">
    <property type="component" value="Chromosome 8"/>
</dbReference>
<dbReference type="Bgee" id="ENSXETG00000019588">
    <property type="expression patterns" value="Expressed in testis and 14 other cell types or tissues"/>
</dbReference>
<dbReference type="ExpressionAtlas" id="Q5M786">
    <property type="expression patterns" value="baseline"/>
</dbReference>
<dbReference type="GO" id="GO:0000123">
    <property type="term" value="C:histone acetyltransferase complex"/>
    <property type="evidence" value="ECO:0000250"/>
    <property type="project" value="UniProtKB"/>
</dbReference>
<dbReference type="GO" id="GO:0071339">
    <property type="term" value="C:MLL1 complex"/>
    <property type="evidence" value="ECO:0000250"/>
    <property type="project" value="UniProtKB"/>
</dbReference>
<dbReference type="GO" id="GO:0006325">
    <property type="term" value="P:chromatin organization"/>
    <property type="evidence" value="ECO:0007669"/>
    <property type="project" value="UniProtKB-KW"/>
</dbReference>
<dbReference type="CDD" id="cd00200">
    <property type="entry name" value="WD40"/>
    <property type="match status" value="1"/>
</dbReference>
<dbReference type="FunFam" id="2.130.10.10:FF:000029">
    <property type="entry name" value="WD repeat-containing protein 5"/>
    <property type="match status" value="1"/>
</dbReference>
<dbReference type="Gene3D" id="2.130.10.10">
    <property type="entry name" value="YVTN repeat-like/Quinoprotein amine dehydrogenase"/>
    <property type="match status" value="1"/>
</dbReference>
<dbReference type="InterPro" id="IPR020472">
    <property type="entry name" value="G-protein_beta_WD-40_rep"/>
</dbReference>
<dbReference type="InterPro" id="IPR015943">
    <property type="entry name" value="WD40/YVTN_repeat-like_dom_sf"/>
</dbReference>
<dbReference type="InterPro" id="IPR019775">
    <property type="entry name" value="WD40_repeat_CS"/>
</dbReference>
<dbReference type="InterPro" id="IPR036322">
    <property type="entry name" value="WD40_repeat_dom_sf"/>
</dbReference>
<dbReference type="InterPro" id="IPR001680">
    <property type="entry name" value="WD40_rpt"/>
</dbReference>
<dbReference type="PANTHER" id="PTHR22847:SF637">
    <property type="entry name" value="WD REPEAT DOMAIN 5B"/>
    <property type="match status" value="1"/>
</dbReference>
<dbReference type="PANTHER" id="PTHR22847">
    <property type="entry name" value="WD40 REPEAT PROTEIN"/>
    <property type="match status" value="1"/>
</dbReference>
<dbReference type="Pfam" id="PF25175">
    <property type="entry name" value="Beta-prop_WDR5"/>
    <property type="match status" value="1"/>
</dbReference>
<dbReference type="PIRSF" id="PIRSF002394">
    <property type="entry name" value="GN-bd_beta"/>
    <property type="match status" value="1"/>
</dbReference>
<dbReference type="PRINTS" id="PR00320">
    <property type="entry name" value="GPROTEINBRPT"/>
</dbReference>
<dbReference type="SMART" id="SM00320">
    <property type="entry name" value="WD40"/>
    <property type="match status" value="7"/>
</dbReference>
<dbReference type="SUPFAM" id="SSF50978">
    <property type="entry name" value="WD40 repeat-like"/>
    <property type="match status" value="1"/>
</dbReference>
<dbReference type="PROSITE" id="PS00678">
    <property type="entry name" value="WD_REPEATS_1"/>
    <property type="match status" value="4"/>
</dbReference>
<dbReference type="PROSITE" id="PS50082">
    <property type="entry name" value="WD_REPEATS_2"/>
    <property type="match status" value="6"/>
</dbReference>
<dbReference type="PROSITE" id="PS50294">
    <property type="entry name" value="WD_REPEATS_REGION"/>
    <property type="match status" value="1"/>
</dbReference>
<accession>Q5M786</accession>
<reference key="1">
    <citation type="submission" date="2006-10" db="EMBL/GenBank/DDBJ databases">
        <authorList>
            <consortium name="Sanger Xenopus tropicalis EST/cDNA project"/>
        </authorList>
    </citation>
    <scope>NUCLEOTIDE SEQUENCE [LARGE SCALE MRNA]</scope>
    <source>
        <tissue>Egg</tissue>
    </source>
</reference>
<reference key="2">
    <citation type="submission" date="2004-12" db="EMBL/GenBank/DDBJ databases">
        <authorList>
            <consortium name="NIH - Xenopus Gene Collection (XGC) project"/>
        </authorList>
    </citation>
    <scope>NUCLEOTIDE SEQUENCE [LARGE SCALE MRNA]</scope>
</reference>
<organism>
    <name type="scientific">Xenopus tropicalis</name>
    <name type="common">Western clawed frog</name>
    <name type="synonym">Silurana tropicalis</name>
    <dbReference type="NCBI Taxonomy" id="8364"/>
    <lineage>
        <taxon>Eukaryota</taxon>
        <taxon>Metazoa</taxon>
        <taxon>Chordata</taxon>
        <taxon>Craniata</taxon>
        <taxon>Vertebrata</taxon>
        <taxon>Euteleostomi</taxon>
        <taxon>Amphibia</taxon>
        <taxon>Batrachia</taxon>
        <taxon>Anura</taxon>
        <taxon>Pipoidea</taxon>
        <taxon>Pipidae</taxon>
        <taxon>Xenopodinae</taxon>
        <taxon>Xenopus</taxon>
        <taxon>Silurana</taxon>
    </lineage>
</organism>
<gene>
    <name type="primary">wdr5</name>
    <name type="ORF">TEgg065j14.1</name>
</gene>